<keyword id="KW-0963">Cytoplasm</keyword>
<keyword id="KW-0238">DNA-binding</keyword>
<keyword id="KW-1185">Reference proteome</keyword>
<keyword id="KW-0804">Transcription</keyword>
<keyword id="KW-0805">Transcription regulation</keyword>
<reference key="1">
    <citation type="journal article" date="2009" name="BMC Genomics">
        <title>Evidence for niche adaptation in the genome of the bovine pathogen Streptococcus uberis.</title>
        <authorList>
            <person name="Ward P.N."/>
            <person name="Holden M.T.G."/>
            <person name="Leigh J.A."/>
            <person name="Lennard N."/>
            <person name="Bignell A."/>
            <person name="Barron A."/>
            <person name="Clark L."/>
            <person name="Quail M.A."/>
            <person name="Woodward J."/>
            <person name="Barrell B.G."/>
            <person name="Egan S.A."/>
            <person name="Field T.R."/>
            <person name="Maskell D."/>
            <person name="Kehoe M."/>
            <person name="Dowson C.G."/>
            <person name="Chanter N."/>
            <person name="Whatmore A.M."/>
            <person name="Bentley S.D."/>
            <person name="Parkhill J."/>
        </authorList>
    </citation>
    <scope>NUCLEOTIDE SEQUENCE [LARGE SCALE GENOMIC DNA]</scope>
    <source>
        <strain>ATCC BAA-854 / 0140J</strain>
    </source>
</reference>
<gene>
    <name type="ordered locus">SUB0364</name>
</gene>
<proteinExistence type="inferred from homology"/>
<dbReference type="EMBL" id="AM946015">
    <property type="protein sequence ID" value="CAR40965.1"/>
    <property type="molecule type" value="Genomic_DNA"/>
</dbReference>
<dbReference type="RefSeq" id="WP_012657900.1">
    <property type="nucleotide sequence ID" value="NC_012004.1"/>
</dbReference>
<dbReference type="SMR" id="B9DTN4"/>
<dbReference type="STRING" id="218495.SUB0364"/>
<dbReference type="KEGG" id="sub:SUB0364"/>
<dbReference type="eggNOG" id="COG0217">
    <property type="taxonomic scope" value="Bacteria"/>
</dbReference>
<dbReference type="HOGENOM" id="CLU_062974_2_0_9"/>
<dbReference type="OrthoDB" id="9781053at2"/>
<dbReference type="Proteomes" id="UP000000449">
    <property type="component" value="Chromosome"/>
</dbReference>
<dbReference type="GO" id="GO:0005829">
    <property type="term" value="C:cytosol"/>
    <property type="evidence" value="ECO:0007669"/>
    <property type="project" value="TreeGrafter"/>
</dbReference>
<dbReference type="GO" id="GO:0003677">
    <property type="term" value="F:DNA binding"/>
    <property type="evidence" value="ECO:0007669"/>
    <property type="project" value="UniProtKB-UniRule"/>
</dbReference>
<dbReference type="GO" id="GO:0006355">
    <property type="term" value="P:regulation of DNA-templated transcription"/>
    <property type="evidence" value="ECO:0007669"/>
    <property type="project" value="UniProtKB-UniRule"/>
</dbReference>
<dbReference type="FunFam" id="1.10.10.200:FF:000003">
    <property type="entry name" value="Probable transcriptional regulatory protein YeeN"/>
    <property type="match status" value="1"/>
</dbReference>
<dbReference type="Gene3D" id="1.10.10.200">
    <property type="match status" value="1"/>
</dbReference>
<dbReference type="Gene3D" id="3.30.70.980">
    <property type="match status" value="2"/>
</dbReference>
<dbReference type="HAMAP" id="MF_00693">
    <property type="entry name" value="Transcrip_reg_TACO1"/>
    <property type="match status" value="1"/>
</dbReference>
<dbReference type="HAMAP" id="MF_00918">
    <property type="entry name" value="Transcrip_reg_TACO1_YeeN"/>
    <property type="match status" value="1"/>
</dbReference>
<dbReference type="InterPro" id="IPR017856">
    <property type="entry name" value="Integrase-like_N"/>
</dbReference>
<dbReference type="InterPro" id="IPR048300">
    <property type="entry name" value="TACO1_YebC-like_2nd/3rd_dom"/>
</dbReference>
<dbReference type="InterPro" id="IPR049083">
    <property type="entry name" value="TACO1_YebC_N"/>
</dbReference>
<dbReference type="InterPro" id="IPR002876">
    <property type="entry name" value="Transcrip_reg_TACO1-like"/>
</dbReference>
<dbReference type="InterPro" id="IPR026564">
    <property type="entry name" value="Transcrip_reg_TACO1-like_dom3"/>
</dbReference>
<dbReference type="InterPro" id="IPR026562">
    <property type="entry name" value="Transcrip_reg_TACO1_YeeN"/>
</dbReference>
<dbReference type="InterPro" id="IPR029072">
    <property type="entry name" value="YebC-like"/>
</dbReference>
<dbReference type="NCBIfam" id="NF001030">
    <property type="entry name" value="PRK00110.1"/>
    <property type="match status" value="1"/>
</dbReference>
<dbReference type="NCBIfam" id="NF009044">
    <property type="entry name" value="PRK12378.1"/>
    <property type="match status" value="1"/>
</dbReference>
<dbReference type="NCBIfam" id="TIGR01033">
    <property type="entry name" value="YebC/PmpR family DNA-binding transcriptional regulator"/>
    <property type="match status" value="1"/>
</dbReference>
<dbReference type="PANTHER" id="PTHR12532">
    <property type="entry name" value="TRANSLATIONAL ACTIVATOR OF CYTOCHROME C OXIDASE 1"/>
    <property type="match status" value="1"/>
</dbReference>
<dbReference type="PANTHER" id="PTHR12532:SF0">
    <property type="entry name" value="TRANSLATIONAL ACTIVATOR OF CYTOCHROME C OXIDASE 1"/>
    <property type="match status" value="1"/>
</dbReference>
<dbReference type="Pfam" id="PF20772">
    <property type="entry name" value="TACO1_YebC_N"/>
    <property type="match status" value="1"/>
</dbReference>
<dbReference type="Pfam" id="PF01709">
    <property type="entry name" value="Transcrip_reg"/>
    <property type="match status" value="1"/>
</dbReference>
<dbReference type="SUPFAM" id="SSF75625">
    <property type="entry name" value="YebC-like"/>
    <property type="match status" value="1"/>
</dbReference>
<protein>
    <recommendedName>
        <fullName evidence="1">Probable transcriptional regulatory protein SUB0364</fullName>
    </recommendedName>
</protein>
<feature type="chain" id="PRO_1000200116" description="Probable transcriptional regulatory protein SUB0364">
    <location>
        <begin position="1"/>
        <end position="238"/>
    </location>
</feature>
<evidence type="ECO:0000255" key="1">
    <source>
        <dbReference type="HAMAP-Rule" id="MF_00918"/>
    </source>
</evidence>
<comment type="subcellular location">
    <subcellularLocation>
        <location evidence="1">Cytoplasm</location>
    </subcellularLocation>
</comment>
<comment type="similarity">
    <text evidence="1">Belongs to the TACO1 family. YeeN subfamily.</text>
</comment>
<name>Y364_STRU0</name>
<organism>
    <name type="scientific">Streptococcus uberis (strain ATCC BAA-854 / 0140J)</name>
    <dbReference type="NCBI Taxonomy" id="218495"/>
    <lineage>
        <taxon>Bacteria</taxon>
        <taxon>Bacillati</taxon>
        <taxon>Bacillota</taxon>
        <taxon>Bacilli</taxon>
        <taxon>Lactobacillales</taxon>
        <taxon>Streptococcaceae</taxon>
        <taxon>Streptococcus</taxon>
    </lineage>
</organism>
<sequence length="238" mass="25794">MGRKWANIVAKKTAKDGATSKVYAKFGVEIYVAAKQGDPDPESNSALKFVIDRAKQAQVPKHVIDKAIDKAKGNTDETFVEGRYEGFGPNGSMIIVDTLTSNVNRTAANVRTAYGKNGGNMGASGSVSYMFDKKGVIVFEGDDADTVFEQLLEADVEVDDVEAEDGAITVYTAPTDLHKGIQALRDNGIETFKVTELEMIPQSEVTLEGDDLATFEKLVDALEADDDVQKVYHNVADF</sequence>
<accession>B9DTN4</accession>